<reference key="1">
    <citation type="journal article" date="2009" name="J. Bacteriol.">
        <title>Complete genome sequence of Erythrobacter litoralis HTCC2594.</title>
        <authorList>
            <person name="Oh H.M."/>
            <person name="Giovannoni S.J."/>
            <person name="Ferriera S."/>
            <person name="Johnson J."/>
            <person name="Cho J.C."/>
        </authorList>
    </citation>
    <scope>NUCLEOTIDE SEQUENCE [LARGE SCALE GENOMIC DNA]</scope>
    <source>
        <strain>HTCC2594</strain>
    </source>
</reference>
<sequence length="307" mass="32790">MTTAASPAALPADWRDFFALTKPRVMTLVIFTGICGLLAAPGAINPILGFTAILCIAMGAGGSAALNQWWEADIDAGMKRTAKRPLPSGRMQATDARDFGILISVASVGIMGIAINWLSAIILAAAIVYYAVIYTIWLKPRTPQNIVIGGGAGAFPPMIGWVAVTGEITLMPVLLFAIIFMWTPPHFWALALFVKTDYEKVGIPMMPVVKGEASTRRQILVYSILLIPFAVAPWAIGATGAIYGVSALLLTGAFAALSVPVATRRQIEGDTMKPEKRLFGFSILYLFALFAALVADRYLTPLIESAA</sequence>
<keyword id="KW-0997">Cell inner membrane</keyword>
<keyword id="KW-1003">Cell membrane</keyword>
<keyword id="KW-0350">Heme biosynthesis</keyword>
<keyword id="KW-0472">Membrane</keyword>
<keyword id="KW-1185">Reference proteome</keyword>
<keyword id="KW-0808">Transferase</keyword>
<keyword id="KW-0812">Transmembrane</keyword>
<keyword id="KW-1133">Transmembrane helix</keyword>
<comment type="function">
    <text evidence="1">Converts heme B (protoheme IX) to heme O by substitution of the vinyl group on carbon 2 of heme B porphyrin ring with a hydroxyethyl farnesyl side group.</text>
</comment>
<comment type="catalytic activity">
    <reaction evidence="1">
        <text>heme b + (2E,6E)-farnesyl diphosphate + H2O = Fe(II)-heme o + diphosphate</text>
        <dbReference type="Rhea" id="RHEA:28070"/>
        <dbReference type="ChEBI" id="CHEBI:15377"/>
        <dbReference type="ChEBI" id="CHEBI:33019"/>
        <dbReference type="ChEBI" id="CHEBI:60344"/>
        <dbReference type="ChEBI" id="CHEBI:60530"/>
        <dbReference type="ChEBI" id="CHEBI:175763"/>
        <dbReference type="EC" id="2.5.1.141"/>
    </reaction>
</comment>
<comment type="pathway">
    <text evidence="1">Porphyrin-containing compound metabolism; heme O biosynthesis; heme O from protoheme: step 1/1.</text>
</comment>
<comment type="subcellular location">
    <subcellularLocation>
        <location evidence="1">Cell inner membrane</location>
        <topology evidence="1">Multi-pass membrane protein</topology>
    </subcellularLocation>
</comment>
<comment type="miscellaneous">
    <text evidence="1">Carbon 2 of the heme B porphyrin ring is defined according to the Fischer nomenclature.</text>
</comment>
<comment type="similarity">
    <text evidence="1">Belongs to the UbiA prenyltransferase family. Protoheme IX farnesyltransferase subfamily.</text>
</comment>
<gene>
    <name evidence="1" type="primary">ctaB</name>
    <name type="ordered locus">ELI_02735</name>
</gene>
<dbReference type="EC" id="2.5.1.141" evidence="1"/>
<dbReference type="EMBL" id="CP000157">
    <property type="protein sequence ID" value="ABC62639.1"/>
    <property type="molecule type" value="Genomic_DNA"/>
</dbReference>
<dbReference type="RefSeq" id="WP_011413515.1">
    <property type="nucleotide sequence ID" value="NC_007722.1"/>
</dbReference>
<dbReference type="SMR" id="Q2NCF2"/>
<dbReference type="STRING" id="314225.ELI_02735"/>
<dbReference type="KEGG" id="eli:ELI_02735"/>
<dbReference type="eggNOG" id="COG0109">
    <property type="taxonomic scope" value="Bacteria"/>
</dbReference>
<dbReference type="HOGENOM" id="CLU_029631_0_2_5"/>
<dbReference type="OrthoDB" id="9814417at2"/>
<dbReference type="UniPathway" id="UPA00834">
    <property type="reaction ID" value="UER00712"/>
</dbReference>
<dbReference type="Proteomes" id="UP000008808">
    <property type="component" value="Chromosome"/>
</dbReference>
<dbReference type="GO" id="GO:0005886">
    <property type="term" value="C:plasma membrane"/>
    <property type="evidence" value="ECO:0007669"/>
    <property type="project" value="UniProtKB-SubCell"/>
</dbReference>
<dbReference type="GO" id="GO:0008495">
    <property type="term" value="F:protoheme IX farnesyltransferase activity"/>
    <property type="evidence" value="ECO:0007669"/>
    <property type="project" value="UniProtKB-UniRule"/>
</dbReference>
<dbReference type="GO" id="GO:0048034">
    <property type="term" value="P:heme O biosynthetic process"/>
    <property type="evidence" value="ECO:0007669"/>
    <property type="project" value="UniProtKB-UniRule"/>
</dbReference>
<dbReference type="CDD" id="cd13957">
    <property type="entry name" value="PT_UbiA_Cox10"/>
    <property type="match status" value="1"/>
</dbReference>
<dbReference type="Gene3D" id="1.10.357.140">
    <property type="entry name" value="UbiA prenyltransferase"/>
    <property type="match status" value="1"/>
</dbReference>
<dbReference type="HAMAP" id="MF_00154">
    <property type="entry name" value="CyoE_CtaB"/>
    <property type="match status" value="1"/>
</dbReference>
<dbReference type="InterPro" id="IPR006369">
    <property type="entry name" value="Protohaem_IX_farnesylTrfase"/>
</dbReference>
<dbReference type="InterPro" id="IPR000537">
    <property type="entry name" value="UbiA_prenyltransferase"/>
</dbReference>
<dbReference type="InterPro" id="IPR030470">
    <property type="entry name" value="UbiA_prenylTrfase_CS"/>
</dbReference>
<dbReference type="InterPro" id="IPR044878">
    <property type="entry name" value="UbiA_sf"/>
</dbReference>
<dbReference type="NCBIfam" id="TIGR01473">
    <property type="entry name" value="cyoE_ctaB"/>
    <property type="match status" value="1"/>
</dbReference>
<dbReference type="NCBIfam" id="NF003349">
    <property type="entry name" value="PRK04375.1-2"/>
    <property type="match status" value="1"/>
</dbReference>
<dbReference type="PANTHER" id="PTHR43448:SF7">
    <property type="entry name" value="4-HYDROXYBENZOATE SOLANESYLTRANSFERASE"/>
    <property type="match status" value="1"/>
</dbReference>
<dbReference type="PANTHER" id="PTHR43448">
    <property type="entry name" value="PROTOHEME IX FARNESYLTRANSFERASE, MITOCHONDRIAL"/>
    <property type="match status" value="1"/>
</dbReference>
<dbReference type="Pfam" id="PF01040">
    <property type="entry name" value="UbiA"/>
    <property type="match status" value="1"/>
</dbReference>
<dbReference type="PROSITE" id="PS00943">
    <property type="entry name" value="UBIA"/>
    <property type="match status" value="1"/>
</dbReference>
<evidence type="ECO:0000255" key="1">
    <source>
        <dbReference type="HAMAP-Rule" id="MF_00154"/>
    </source>
</evidence>
<organism>
    <name type="scientific">Erythrobacter litoralis (strain HTCC2594)</name>
    <dbReference type="NCBI Taxonomy" id="314225"/>
    <lineage>
        <taxon>Bacteria</taxon>
        <taxon>Pseudomonadati</taxon>
        <taxon>Pseudomonadota</taxon>
        <taxon>Alphaproteobacteria</taxon>
        <taxon>Sphingomonadales</taxon>
        <taxon>Erythrobacteraceae</taxon>
        <taxon>Erythrobacter/Porphyrobacter group</taxon>
        <taxon>Erythrobacter</taxon>
    </lineage>
</organism>
<feature type="chain" id="PRO_0000327052" description="Protoheme IX farnesyltransferase">
    <location>
        <begin position="1"/>
        <end position="307"/>
    </location>
</feature>
<feature type="transmembrane region" description="Helical" evidence="1">
    <location>
        <begin position="28"/>
        <end position="48"/>
    </location>
</feature>
<feature type="transmembrane region" description="Helical" evidence="1">
    <location>
        <begin position="50"/>
        <end position="70"/>
    </location>
</feature>
<feature type="transmembrane region" description="Helical" evidence="1">
    <location>
        <begin position="99"/>
        <end position="117"/>
    </location>
</feature>
<feature type="transmembrane region" description="Helical" evidence="1">
    <location>
        <begin position="121"/>
        <end position="138"/>
    </location>
</feature>
<feature type="transmembrane region" description="Helical" evidence="1">
    <location>
        <begin position="146"/>
        <end position="166"/>
    </location>
</feature>
<feature type="transmembrane region" description="Helical" evidence="1">
    <location>
        <begin position="173"/>
        <end position="193"/>
    </location>
</feature>
<feature type="transmembrane region" description="Helical" evidence="1">
    <location>
        <begin position="219"/>
        <end position="239"/>
    </location>
</feature>
<feature type="transmembrane region" description="Helical" evidence="1">
    <location>
        <begin position="241"/>
        <end position="261"/>
    </location>
</feature>
<feature type="transmembrane region" description="Helical" evidence="1">
    <location>
        <begin position="278"/>
        <end position="298"/>
    </location>
</feature>
<protein>
    <recommendedName>
        <fullName evidence="1">Protoheme IX farnesyltransferase</fullName>
        <ecNumber evidence="1">2.5.1.141</ecNumber>
    </recommendedName>
    <alternativeName>
        <fullName evidence="1">Heme B farnesyltransferase</fullName>
    </alternativeName>
    <alternativeName>
        <fullName evidence="1">Heme O synthase</fullName>
    </alternativeName>
</protein>
<name>COXX_ERYLH</name>
<proteinExistence type="inferred from homology"/>
<accession>Q2NCF2</accession>